<comment type="function">
    <text evidence="1">Overproduction of CaiE stimulates the activity of CaiB and CaiD.</text>
</comment>
<comment type="pathway">
    <text evidence="1">Amine and polyamine metabolism; carnitine metabolism.</text>
</comment>
<comment type="similarity">
    <text evidence="1">Belongs to the transferase hexapeptide repeat family.</text>
</comment>
<gene>
    <name evidence="1" type="primary">caiE</name>
    <name type="ordered locus">SPC_0074</name>
</gene>
<keyword id="KW-0677">Repeat</keyword>
<keyword id="KW-0808">Transferase</keyword>
<proteinExistence type="inferred from homology"/>
<name>CAIE_SALPC</name>
<sequence>MSYYAFEGLIPVVHPDAFVHPSAVLIGDVIVGAGVYIGPLASLRGDYGRLILEAGSNLQDGCIMHGYCDTDTIVHENGHIGHGAILHGCVVGRDALVGMNSVIMDGAVIGEESIVAAMSFVKAGFQGEARQLLVGSPARVLRQVTDQELHWKRLNTKEYQDLAIRCRTGLSETKPLTQVEENRPRLKGTTDVKPKSAQ</sequence>
<accession>C0Q4L1</accession>
<dbReference type="EMBL" id="CP000857">
    <property type="protein sequence ID" value="ACN44266.1"/>
    <property type="molecule type" value="Genomic_DNA"/>
</dbReference>
<dbReference type="RefSeq" id="WP_000122863.1">
    <property type="nucleotide sequence ID" value="NC_012125.1"/>
</dbReference>
<dbReference type="SMR" id="C0Q4L1"/>
<dbReference type="KEGG" id="sei:SPC_0074"/>
<dbReference type="HOGENOM" id="CLU_064827_4_2_6"/>
<dbReference type="UniPathway" id="UPA00117"/>
<dbReference type="Proteomes" id="UP000001599">
    <property type="component" value="Chromosome"/>
</dbReference>
<dbReference type="GO" id="GO:0016740">
    <property type="term" value="F:transferase activity"/>
    <property type="evidence" value="ECO:0007669"/>
    <property type="project" value="UniProtKB-KW"/>
</dbReference>
<dbReference type="GO" id="GO:0009437">
    <property type="term" value="P:carnitine metabolic process"/>
    <property type="evidence" value="ECO:0007669"/>
    <property type="project" value="UniProtKB-UniRule"/>
</dbReference>
<dbReference type="CDD" id="cd04745">
    <property type="entry name" value="LbH_paaY_like"/>
    <property type="match status" value="1"/>
</dbReference>
<dbReference type="FunFam" id="2.160.10.10:FF:000012">
    <property type="entry name" value="Carnitine operon protein CaiE"/>
    <property type="match status" value="1"/>
</dbReference>
<dbReference type="Gene3D" id="2.160.10.10">
    <property type="entry name" value="Hexapeptide repeat proteins"/>
    <property type="match status" value="1"/>
</dbReference>
<dbReference type="HAMAP" id="MF_01525">
    <property type="entry name" value="CaiE"/>
    <property type="match status" value="1"/>
</dbReference>
<dbReference type="InterPro" id="IPR023446">
    <property type="entry name" value="CaiE"/>
</dbReference>
<dbReference type="InterPro" id="IPR001451">
    <property type="entry name" value="Hexapep"/>
</dbReference>
<dbReference type="InterPro" id="IPR050484">
    <property type="entry name" value="Transf_Hexapept/Carb_Anhydrase"/>
</dbReference>
<dbReference type="InterPro" id="IPR011004">
    <property type="entry name" value="Trimer_LpxA-like_sf"/>
</dbReference>
<dbReference type="NCBIfam" id="NF010150">
    <property type="entry name" value="PRK13627.1"/>
    <property type="match status" value="1"/>
</dbReference>
<dbReference type="PANTHER" id="PTHR13061">
    <property type="entry name" value="DYNACTIN SUBUNIT P25"/>
    <property type="match status" value="1"/>
</dbReference>
<dbReference type="PANTHER" id="PTHR13061:SF29">
    <property type="entry name" value="GAMMA CARBONIC ANHYDRASE-LIKE 1, MITOCHONDRIAL-RELATED"/>
    <property type="match status" value="1"/>
</dbReference>
<dbReference type="Pfam" id="PF00132">
    <property type="entry name" value="Hexapep"/>
    <property type="match status" value="2"/>
</dbReference>
<dbReference type="SUPFAM" id="SSF51161">
    <property type="entry name" value="Trimeric LpxA-like enzymes"/>
    <property type="match status" value="1"/>
</dbReference>
<protein>
    <recommendedName>
        <fullName evidence="1">Carnitine operon protein CaiE</fullName>
    </recommendedName>
</protein>
<feature type="chain" id="PRO_1000185134" description="Carnitine operon protein CaiE">
    <location>
        <begin position="1"/>
        <end position="198"/>
    </location>
</feature>
<feature type="region of interest" description="Disordered" evidence="2">
    <location>
        <begin position="179"/>
        <end position="198"/>
    </location>
</feature>
<feature type="compositionally biased region" description="Basic and acidic residues" evidence="2">
    <location>
        <begin position="180"/>
        <end position="198"/>
    </location>
</feature>
<organism>
    <name type="scientific">Salmonella paratyphi C (strain RKS4594)</name>
    <dbReference type="NCBI Taxonomy" id="476213"/>
    <lineage>
        <taxon>Bacteria</taxon>
        <taxon>Pseudomonadati</taxon>
        <taxon>Pseudomonadota</taxon>
        <taxon>Gammaproteobacteria</taxon>
        <taxon>Enterobacterales</taxon>
        <taxon>Enterobacteriaceae</taxon>
        <taxon>Salmonella</taxon>
    </lineage>
</organism>
<reference key="1">
    <citation type="journal article" date="2009" name="PLoS ONE">
        <title>Salmonella paratyphi C: genetic divergence from Salmonella choleraesuis and pathogenic convergence with Salmonella typhi.</title>
        <authorList>
            <person name="Liu W.-Q."/>
            <person name="Feng Y."/>
            <person name="Wang Y."/>
            <person name="Zou Q.-H."/>
            <person name="Chen F."/>
            <person name="Guo J.-T."/>
            <person name="Peng Y.-H."/>
            <person name="Jin Y."/>
            <person name="Li Y.-G."/>
            <person name="Hu S.-N."/>
            <person name="Johnston R.N."/>
            <person name="Liu G.-R."/>
            <person name="Liu S.-L."/>
        </authorList>
    </citation>
    <scope>NUCLEOTIDE SEQUENCE [LARGE SCALE GENOMIC DNA]</scope>
    <source>
        <strain>RKS4594</strain>
    </source>
</reference>
<evidence type="ECO:0000255" key="1">
    <source>
        <dbReference type="HAMAP-Rule" id="MF_01525"/>
    </source>
</evidence>
<evidence type="ECO:0000256" key="2">
    <source>
        <dbReference type="SAM" id="MobiDB-lite"/>
    </source>
</evidence>